<evidence type="ECO:0000255" key="1">
    <source>
        <dbReference type="HAMAP-Rule" id="MF_00068"/>
    </source>
</evidence>
<keyword id="KW-0119">Carbohydrate metabolism</keyword>
<keyword id="KW-0456">Lyase</keyword>
<keyword id="KW-1185">Reference proteome</keyword>
<reference key="1">
    <citation type="journal article" date="2007" name="J. Bacteriol.">
        <title>The genome sequence of avian pathogenic Escherichia coli strain O1:K1:H7 shares strong similarities with human extraintestinal pathogenic E. coli genomes.</title>
        <authorList>
            <person name="Johnson T.J."/>
            <person name="Kariyawasam S."/>
            <person name="Wannemuehler Y."/>
            <person name="Mangiamele P."/>
            <person name="Johnson S.J."/>
            <person name="Doetkott C."/>
            <person name="Skyberg J.A."/>
            <person name="Lynne A.M."/>
            <person name="Johnson J.R."/>
            <person name="Nolan L.K."/>
        </authorList>
    </citation>
    <scope>NUCLEOTIDE SEQUENCE [LARGE SCALE GENOMIC DNA]</scope>
</reference>
<dbReference type="EC" id="4.2.1.126" evidence="1"/>
<dbReference type="EMBL" id="CP000468">
    <property type="protein sequence ID" value="ABJ01833.1"/>
    <property type="molecule type" value="Genomic_DNA"/>
</dbReference>
<dbReference type="RefSeq" id="WP_001175632.1">
    <property type="nucleotide sequence ID" value="NZ_CADILS010000039.1"/>
</dbReference>
<dbReference type="SMR" id="A1ADU3"/>
<dbReference type="KEGG" id="ecv:APECO1_4119"/>
<dbReference type="HOGENOM" id="CLU_049049_1_1_6"/>
<dbReference type="UniPathway" id="UPA00342"/>
<dbReference type="UniPathway" id="UPA00343"/>
<dbReference type="UniPathway" id="UPA00544"/>
<dbReference type="Proteomes" id="UP000008216">
    <property type="component" value="Chromosome"/>
</dbReference>
<dbReference type="GO" id="GO:0097367">
    <property type="term" value="F:carbohydrate derivative binding"/>
    <property type="evidence" value="ECO:0007669"/>
    <property type="project" value="InterPro"/>
</dbReference>
<dbReference type="GO" id="GO:0016835">
    <property type="term" value="F:carbon-oxygen lyase activity"/>
    <property type="evidence" value="ECO:0007669"/>
    <property type="project" value="UniProtKB-UniRule"/>
</dbReference>
<dbReference type="GO" id="GO:0016803">
    <property type="term" value="F:ether hydrolase activity"/>
    <property type="evidence" value="ECO:0007669"/>
    <property type="project" value="TreeGrafter"/>
</dbReference>
<dbReference type="GO" id="GO:0097175">
    <property type="term" value="P:1,6-anhydro-N-acetyl-beta-muramic acid catabolic process"/>
    <property type="evidence" value="ECO:0007669"/>
    <property type="project" value="UniProtKB-UniRule"/>
</dbReference>
<dbReference type="GO" id="GO:0046348">
    <property type="term" value="P:amino sugar catabolic process"/>
    <property type="evidence" value="ECO:0007669"/>
    <property type="project" value="InterPro"/>
</dbReference>
<dbReference type="GO" id="GO:0097173">
    <property type="term" value="P:N-acetylmuramic acid catabolic process"/>
    <property type="evidence" value="ECO:0007669"/>
    <property type="project" value="UniProtKB-UniPathway"/>
</dbReference>
<dbReference type="GO" id="GO:0009254">
    <property type="term" value="P:peptidoglycan turnover"/>
    <property type="evidence" value="ECO:0007669"/>
    <property type="project" value="UniProtKB-UniRule"/>
</dbReference>
<dbReference type="CDD" id="cd05007">
    <property type="entry name" value="SIS_Etherase"/>
    <property type="match status" value="1"/>
</dbReference>
<dbReference type="FunFam" id="1.10.8.1080:FF:000001">
    <property type="entry name" value="N-acetylmuramic acid 6-phosphate etherase"/>
    <property type="match status" value="1"/>
</dbReference>
<dbReference type="FunFam" id="3.40.50.10490:FF:000014">
    <property type="entry name" value="N-acetylmuramic acid 6-phosphate etherase"/>
    <property type="match status" value="1"/>
</dbReference>
<dbReference type="Gene3D" id="1.10.8.1080">
    <property type="match status" value="1"/>
</dbReference>
<dbReference type="Gene3D" id="3.40.50.10490">
    <property type="entry name" value="Glucose-6-phosphate isomerase like protein, domain 1"/>
    <property type="match status" value="1"/>
</dbReference>
<dbReference type="HAMAP" id="MF_00068">
    <property type="entry name" value="MurQ"/>
    <property type="match status" value="1"/>
</dbReference>
<dbReference type="InterPro" id="IPR005488">
    <property type="entry name" value="Etherase_MurQ"/>
</dbReference>
<dbReference type="InterPro" id="IPR005486">
    <property type="entry name" value="Glucokinase_regulatory_CS"/>
</dbReference>
<dbReference type="InterPro" id="IPR040190">
    <property type="entry name" value="MURQ/GCKR"/>
</dbReference>
<dbReference type="InterPro" id="IPR001347">
    <property type="entry name" value="SIS_dom"/>
</dbReference>
<dbReference type="InterPro" id="IPR046348">
    <property type="entry name" value="SIS_dom_sf"/>
</dbReference>
<dbReference type="NCBIfam" id="TIGR00274">
    <property type="entry name" value="N-acetylmuramic acid 6-phosphate etherase"/>
    <property type="match status" value="1"/>
</dbReference>
<dbReference type="NCBIfam" id="NF003915">
    <property type="entry name" value="PRK05441.1"/>
    <property type="match status" value="1"/>
</dbReference>
<dbReference type="NCBIfam" id="NF009222">
    <property type="entry name" value="PRK12570.1"/>
    <property type="match status" value="1"/>
</dbReference>
<dbReference type="PANTHER" id="PTHR10088">
    <property type="entry name" value="GLUCOKINASE REGULATORY PROTEIN"/>
    <property type="match status" value="1"/>
</dbReference>
<dbReference type="PANTHER" id="PTHR10088:SF4">
    <property type="entry name" value="GLUCOKINASE REGULATORY PROTEIN"/>
    <property type="match status" value="1"/>
</dbReference>
<dbReference type="Pfam" id="PF22645">
    <property type="entry name" value="GKRP_SIS_N"/>
    <property type="match status" value="1"/>
</dbReference>
<dbReference type="SUPFAM" id="SSF53697">
    <property type="entry name" value="SIS domain"/>
    <property type="match status" value="1"/>
</dbReference>
<dbReference type="PROSITE" id="PS01272">
    <property type="entry name" value="GCKR"/>
    <property type="match status" value="1"/>
</dbReference>
<dbReference type="PROSITE" id="PS51464">
    <property type="entry name" value="SIS"/>
    <property type="match status" value="1"/>
</dbReference>
<comment type="function">
    <text evidence="1">Specifically catalyzes the cleavage of the D-lactyl ether substituent of MurNAc 6-phosphate, producing GlcNAc 6-phosphate and D-lactate. Together with AnmK, is also required for the utilization of anhydro-N-acetylmuramic acid (anhMurNAc) either imported from the medium or derived from its own cell wall murein, and thus plays a role in cell wall recycling.</text>
</comment>
<comment type="catalytic activity">
    <reaction evidence="1">
        <text>N-acetyl-D-muramate 6-phosphate + H2O = N-acetyl-D-glucosamine 6-phosphate + (R)-lactate</text>
        <dbReference type="Rhea" id="RHEA:26410"/>
        <dbReference type="ChEBI" id="CHEBI:15377"/>
        <dbReference type="ChEBI" id="CHEBI:16004"/>
        <dbReference type="ChEBI" id="CHEBI:57513"/>
        <dbReference type="ChEBI" id="CHEBI:58722"/>
        <dbReference type="EC" id="4.2.1.126"/>
    </reaction>
</comment>
<comment type="pathway">
    <text evidence="1">Amino-sugar metabolism; 1,6-anhydro-N-acetylmuramate degradation.</text>
</comment>
<comment type="pathway">
    <text evidence="1">Amino-sugar metabolism; N-acetylmuramate degradation.</text>
</comment>
<comment type="pathway">
    <text evidence="1">Cell wall biogenesis; peptidoglycan recycling.</text>
</comment>
<comment type="subunit">
    <text evidence="1">Homodimer.</text>
</comment>
<comment type="induction">
    <text evidence="1">Induced by MurNAc 6-phosphate that releases the repressor MurR from the DNA. Repressed by MurR in the absence of MurNAc 6-phosphate.</text>
</comment>
<comment type="miscellaneous">
    <text evidence="1">A lyase-type mechanism (elimination/hydration) is suggested for the cleavage of the lactyl ether bond of MurNAc 6-phosphate, with the formation of an alpha,beta-unsaturated aldehyde intermediate with (E)-stereochemistry, followed by the syn addition of water to give product.</text>
</comment>
<comment type="similarity">
    <text evidence="1">Belongs to the GCKR-like family. MurNAc-6-P etherase subfamily.</text>
</comment>
<sequence>MQLEKMITEGSNAASAEIDRVSTLEMCRIINDEDKTVPLAVERVLPDIAAAIDVIHTQVSGGGRLIYLGAGTSGRLGILDASECPPTYGVKPGLVVGLIAGGEYAIQHAVEGAEDSREGGVNDLKNINLTAQDVVVGIAASGRTPYVIAGLEYARQLGCRTVGISCNPGSAVSSTAEFAITPVVGAEVVTGSSRMKAGTAQKLVLNMLSTGLMIKSGKVFGNLMVDVVATNEKLHVRQVNIVKNATGCNAEQAEAALIACERNCKTAIVMVLKNLDADEAKKCLDQHGGFIRKALEKE</sequence>
<organism>
    <name type="scientific">Escherichia coli O1:K1 / APEC</name>
    <dbReference type="NCBI Taxonomy" id="405955"/>
    <lineage>
        <taxon>Bacteria</taxon>
        <taxon>Pseudomonadati</taxon>
        <taxon>Pseudomonadota</taxon>
        <taxon>Gammaproteobacteria</taxon>
        <taxon>Enterobacterales</taxon>
        <taxon>Enterobacteriaceae</taxon>
        <taxon>Escherichia</taxon>
    </lineage>
</organism>
<proteinExistence type="inferred from homology"/>
<feature type="chain" id="PRO_1000009114" description="N-acetylmuramic acid 6-phosphate etherase">
    <location>
        <begin position="1"/>
        <end position="298"/>
    </location>
</feature>
<feature type="domain" description="SIS" evidence="1">
    <location>
        <begin position="55"/>
        <end position="218"/>
    </location>
</feature>
<feature type="active site" description="Proton donor" evidence="1">
    <location>
        <position position="83"/>
    </location>
</feature>
<feature type="active site" evidence="1">
    <location>
        <position position="114"/>
    </location>
</feature>
<gene>
    <name evidence="1" type="primary">murQ</name>
    <name type="ordered locus">Ecok1_23390</name>
    <name type="ORF">APECO1_4119</name>
</gene>
<accession>A1ADU3</accession>
<protein>
    <recommendedName>
        <fullName evidence="1">N-acetylmuramic acid 6-phosphate etherase</fullName>
        <shortName evidence="1">MurNAc-6-P etherase</shortName>
        <ecNumber evidence="1">4.2.1.126</ecNumber>
    </recommendedName>
    <alternativeName>
        <fullName evidence="1">N-acetylmuramic acid 6-phosphate hydrolase</fullName>
    </alternativeName>
    <alternativeName>
        <fullName evidence="1">N-acetylmuramic acid 6-phosphate lyase</fullName>
    </alternativeName>
</protein>
<name>MURQ_ECOK1</name>